<sequence length="540" mass="58391">MPPAVPAAAATARQSASGRERNFKDKDKPESVRNSNIVAAKAVADAVRTSLGPRGMDKMIQSGNGDVTITNDGATILNQMSVIHPTAKMLVELSKAQDIEAGDGTTTVVVMAGALLDAAQNLLSKGIHPTTISESFQSAAAEAEKILDEMSSPVDLSNDALLNKMATTSLNSKVVSQHSWLLAPMAVNAVKKIINSENDSNVNLKMIKIIKKMGDTVEESELIEGALIDQKTMGRGAPTRIEKAKIGLIQFQISPPKTDMENQVIITDYAQMDRALKEERQYLLEICKQIKAAGCNVLLIQKSILRDAVNELALHFLAKMKIMCIKDIEREDIEFYSRILGCRPVASVDHFNADALGYADLVEEIPTGGDGKVIKVTGVQNPGHAVSILLRGSNKLVLEEADRSIHDALCVIRCLVKKKALLPGGGAPEMEIAVKLRNLAQTQHGATQYCWRAFADALELIPYTLAENAGLSPIHTVTELRNNHANGNSSYGVNVRKGYVTDMVEEDVVQPLLVTASAIKQASECVRSILKIDDIVMAVR</sequence>
<reference key="1">
    <citation type="journal article" date="1995" name="DNA Cell Biol.">
        <title>Characterization of four new tcp-1-related cct genes from the nematode Caenorhabditis elegans.</title>
        <authorList>
            <person name="Leroux M.R."/>
            <person name="Candido E.P.M."/>
        </authorList>
    </citation>
    <scope>NUCLEOTIDE SEQUENCE [MRNA]</scope>
    <source>
        <strain>Bristol N2</strain>
    </source>
</reference>
<reference key="2">
    <citation type="journal article" date="1998" name="Science">
        <title>Genome sequence of the nematode C. elegans: a platform for investigating biology.</title>
        <authorList>
            <consortium name="The C. elegans sequencing consortium"/>
        </authorList>
    </citation>
    <scope>NUCLEOTIDE SEQUENCE [LARGE SCALE GENOMIC DNA]</scope>
    <source>
        <strain>Bristol N2</strain>
    </source>
</reference>
<protein>
    <recommendedName>
        <fullName>T-complex protein 1 subunit delta</fullName>
        <shortName>TCP-1-delta</shortName>
    </recommendedName>
    <alternativeName>
        <fullName>CCT-delta</fullName>
    </alternativeName>
</protein>
<proteinExistence type="evidence at transcript level"/>
<name>TCPD_CAEEL</name>
<gene>
    <name type="primary">cct-4</name>
    <name type="ORF">K01C8.10</name>
</gene>
<keyword id="KW-0067">ATP-binding</keyword>
<keyword id="KW-0143">Chaperone</keyword>
<keyword id="KW-0963">Cytoplasm</keyword>
<keyword id="KW-0547">Nucleotide-binding</keyword>
<keyword id="KW-1185">Reference proteome</keyword>
<evidence type="ECO:0000256" key="1">
    <source>
        <dbReference type="SAM" id="MobiDB-lite"/>
    </source>
</evidence>
<evidence type="ECO:0000305" key="2"/>
<comment type="function">
    <text>Molecular chaperone; assists the folding of proteins upon ATP hydrolysis. Known to play a role, in vitro, in the folding of actin and tubulin.</text>
</comment>
<comment type="subunit">
    <text>Heterooligomeric complex of about 850 to 900 kDa that forms two stacked rings, 12 to 16 nm in diameter.</text>
</comment>
<comment type="subcellular location">
    <subcellularLocation>
        <location>Cytoplasm</location>
    </subcellularLocation>
</comment>
<comment type="similarity">
    <text evidence="2">Belongs to the TCP-1 chaperonin family.</text>
</comment>
<accession>P47208</accession>
<feature type="chain" id="PRO_0000128337" description="T-complex protein 1 subunit delta">
    <location>
        <begin position="1"/>
        <end position="540"/>
    </location>
</feature>
<feature type="region of interest" description="Disordered" evidence="1">
    <location>
        <begin position="1"/>
        <end position="32"/>
    </location>
</feature>
<feature type="compositionally biased region" description="Low complexity" evidence="1">
    <location>
        <begin position="1"/>
        <end position="12"/>
    </location>
</feature>
<feature type="compositionally biased region" description="Basic and acidic residues" evidence="1">
    <location>
        <begin position="18"/>
        <end position="31"/>
    </location>
</feature>
<organism>
    <name type="scientific">Caenorhabditis elegans</name>
    <dbReference type="NCBI Taxonomy" id="6239"/>
    <lineage>
        <taxon>Eukaryota</taxon>
        <taxon>Metazoa</taxon>
        <taxon>Ecdysozoa</taxon>
        <taxon>Nematoda</taxon>
        <taxon>Chromadorea</taxon>
        <taxon>Rhabditida</taxon>
        <taxon>Rhabditina</taxon>
        <taxon>Rhabditomorpha</taxon>
        <taxon>Rhabditoidea</taxon>
        <taxon>Rhabditidae</taxon>
        <taxon>Peloderinae</taxon>
        <taxon>Caenorhabditis</taxon>
    </lineage>
</organism>
<dbReference type="EMBL" id="U25697">
    <property type="protein sequence ID" value="AAA92842.1"/>
    <property type="molecule type" value="mRNA"/>
</dbReference>
<dbReference type="EMBL" id="Z49068">
    <property type="protein sequence ID" value="CAA88861.1"/>
    <property type="molecule type" value="Genomic_DNA"/>
</dbReference>
<dbReference type="PIR" id="T23173">
    <property type="entry name" value="T23173"/>
</dbReference>
<dbReference type="RefSeq" id="NP_495750.1">
    <property type="nucleotide sequence ID" value="NM_063349.9"/>
</dbReference>
<dbReference type="SMR" id="P47208"/>
<dbReference type="BioGRID" id="39659">
    <property type="interactions" value="17"/>
</dbReference>
<dbReference type="FunCoup" id="P47208">
    <property type="interactions" value="2985"/>
</dbReference>
<dbReference type="IntAct" id="P47208">
    <property type="interactions" value="2"/>
</dbReference>
<dbReference type="STRING" id="6239.K01C8.10.1"/>
<dbReference type="PaxDb" id="6239-K01C8.10.2"/>
<dbReference type="PeptideAtlas" id="P47208"/>
<dbReference type="EnsemblMetazoa" id="K01C8.10.1">
    <property type="protein sequence ID" value="K01C8.10.1"/>
    <property type="gene ID" value="WBGene00000379"/>
</dbReference>
<dbReference type="EnsemblMetazoa" id="K01C8.10.2">
    <property type="protein sequence ID" value="K01C8.10.2"/>
    <property type="gene ID" value="WBGene00000379"/>
</dbReference>
<dbReference type="GeneID" id="174330"/>
<dbReference type="KEGG" id="cel:CELE_K01C8.10"/>
<dbReference type="UCSC" id="K01C8.10.1">
    <property type="organism name" value="c. elegans"/>
</dbReference>
<dbReference type="AGR" id="WB:WBGene00000379"/>
<dbReference type="CTD" id="174330"/>
<dbReference type="WormBase" id="K01C8.10">
    <property type="protein sequence ID" value="CE02262"/>
    <property type="gene ID" value="WBGene00000379"/>
    <property type="gene designation" value="cct-4"/>
</dbReference>
<dbReference type="eggNOG" id="KOG0358">
    <property type="taxonomic scope" value="Eukaryota"/>
</dbReference>
<dbReference type="GeneTree" id="ENSGT00550000074956"/>
<dbReference type="HOGENOM" id="CLU_008891_9_1_1"/>
<dbReference type="InParanoid" id="P47208"/>
<dbReference type="OMA" id="HPAANMI"/>
<dbReference type="OrthoDB" id="10248520at2759"/>
<dbReference type="PhylomeDB" id="P47208"/>
<dbReference type="BRENDA" id="3.6.4.B10">
    <property type="organism ID" value="1045"/>
</dbReference>
<dbReference type="Reactome" id="R-CEL-390471">
    <property type="pathway name" value="Association of TriC/CCT with target proteins during biosynthesis"/>
</dbReference>
<dbReference type="Reactome" id="R-CEL-6814122">
    <property type="pathway name" value="Cooperation of PDCL (PhLP1) and TRiC/CCT in G-protein beta folding"/>
</dbReference>
<dbReference type="PRO" id="PR:P47208"/>
<dbReference type="Proteomes" id="UP000001940">
    <property type="component" value="Chromosome II"/>
</dbReference>
<dbReference type="Bgee" id="WBGene00000379">
    <property type="expression patterns" value="Expressed in germ line (C elegans) and 4 other cell types or tissues"/>
</dbReference>
<dbReference type="GO" id="GO:0005832">
    <property type="term" value="C:chaperonin-containing T-complex"/>
    <property type="evidence" value="ECO:0000318"/>
    <property type="project" value="GO_Central"/>
</dbReference>
<dbReference type="GO" id="GO:0005524">
    <property type="term" value="F:ATP binding"/>
    <property type="evidence" value="ECO:0007669"/>
    <property type="project" value="UniProtKB-KW"/>
</dbReference>
<dbReference type="GO" id="GO:0016887">
    <property type="term" value="F:ATP hydrolysis activity"/>
    <property type="evidence" value="ECO:0007669"/>
    <property type="project" value="InterPro"/>
</dbReference>
<dbReference type="GO" id="GO:0140662">
    <property type="term" value="F:ATP-dependent protein folding chaperone"/>
    <property type="evidence" value="ECO:0007669"/>
    <property type="project" value="InterPro"/>
</dbReference>
<dbReference type="GO" id="GO:0051082">
    <property type="term" value="F:unfolded protein binding"/>
    <property type="evidence" value="ECO:0000250"/>
    <property type="project" value="WormBase"/>
</dbReference>
<dbReference type="GO" id="GO:0040032">
    <property type="term" value="P:post-embryonic body morphogenesis"/>
    <property type="evidence" value="ECO:0000315"/>
    <property type="project" value="WormBase"/>
</dbReference>
<dbReference type="GO" id="GO:0006457">
    <property type="term" value="P:protein folding"/>
    <property type="evidence" value="ECO:0000250"/>
    <property type="project" value="WormBase"/>
</dbReference>
<dbReference type="CDD" id="cd03338">
    <property type="entry name" value="TCP1_delta"/>
    <property type="match status" value="1"/>
</dbReference>
<dbReference type="FunFam" id="3.50.7.10:FF:000010">
    <property type="entry name" value="T-complex protein 1 subunit delta"/>
    <property type="match status" value="1"/>
</dbReference>
<dbReference type="Gene3D" id="3.50.7.10">
    <property type="entry name" value="GroEL"/>
    <property type="match status" value="1"/>
</dbReference>
<dbReference type="Gene3D" id="1.10.560.10">
    <property type="entry name" value="GroEL-like equatorial domain"/>
    <property type="match status" value="1"/>
</dbReference>
<dbReference type="Gene3D" id="3.30.260.10">
    <property type="entry name" value="TCP-1-like chaperonin intermediate domain"/>
    <property type="match status" value="1"/>
</dbReference>
<dbReference type="InterPro" id="IPR012717">
    <property type="entry name" value="Chap_CCT_delta"/>
</dbReference>
<dbReference type="InterPro" id="IPR017998">
    <property type="entry name" value="Chaperone_TCP-1"/>
</dbReference>
<dbReference type="InterPro" id="IPR002194">
    <property type="entry name" value="Chaperonin_TCP-1_CS"/>
</dbReference>
<dbReference type="InterPro" id="IPR002423">
    <property type="entry name" value="Cpn60/GroEL/TCP-1"/>
</dbReference>
<dbReference type="InterPro" id="IPR027409">
    <property type="entry name" value="GroEL-like_apical_dom_sf"/>
</dbReference>
<dbReference type="InterPro" id="IPR027413">
    <property type="entry name" value="GROEL-like_equatorial_sf"/>
</dbReference>
<dbReference type="InterPro" id="IPR027410">
    <property type="entry name" value="TCP-1-like_intermed_sf"/>
</dbReference>
<dbReference type="InterPro" id="IPR053374">
    <property type="entry name" value="TCP-1_chaperonin"/>
</dbReference>
<dbReference type="InterPro" id="IPR054827">
    <property type="entry name" value="thermosome_alpha"/>
</dbReference>
<dbReference type="NCBIfam" id="TIGR02342">
    <property type="entry name" value="chap_CCT_delta"/>
    <property type="match status" value="1"/>
</dbReference>
<dbReference type="NCBIfam" id="NF041082">
    <property type="entry name" value="thermosome_alpha"/>
    <property type="match status" value="1"/>
</dbReference>
<dbReference type="NCBIfam" id="NF041083">
    <property type="entry name" value="thermosome_beta"/>
    <property type="match status" value="1"/>
</dbReference>
<dbReference type="PANTHER" id="PTHR11353">
    <property type="entry name" value="CHAPERONIN"/>
    <property type="match status" value="1"/>
</dbReference>
<dbReference type="Pfam" id="PF00118">
    <property type="entry name" value="Cpn60_TCP1"/>
    <property type="match status" value="1"/>
</dbReference>
<dbReference type="PRINTS" id="PR00304">
    <property type="entry name" value="TCOMPLEXTCP1"/>
</dbReference>
<dbReference type="SUPFAM" id="SSF52029">
    <property type="entry name" value="GroEL apical domain-like"/>
    <property type="match status" value="1"/>
</dbReference>
<dbReference type="SUPFAM" id="SSF48592">
    <property type="entry name" value="GroEL equatorial domain-like"/>
    <property type="match status" value="1"/>
</dbReference>
<dbReference type="SUPFAM" id="SSF54849">
    <property type="entry name" value="GroEL-intermediate domain like"/>
    <property type="match status" value="1"/>
</dbReference>
<dbReference type="PROSITE" id="PS00750">
    <property type="entry name" value="TCP1_1"/>
    <property type="match status" value="1"/>
</dbReference>
<dbReference type="PROSITE" id="PS00751">
    <property type="entry name" value="TCP1_2"/>
    <property type="match status" value="1"/>
</dbReference>
<dbReference type="PROSITE" id="PS00995">
    <property type="entry name" value="TCP1_3"/>
    <property type="match status" value="1"/>
</dbReference>